<organism>
    <name type="scientific">Roseobacter denitrificans (strain ATCC 33942 / OCh 114)</name>
    <name type="common">Erythrobacter sp. (strain OCh 114)</name>
    <name type="synonym">Roseobacter denitrificans</name>
    <dbReference type="NCBI Taxonomy" id="375451"/>
    <lineage>
        <taxon>Bacteria</taxon>
        <taxon>Pseudomonadati</taxon>
        <taxon>Pseudomonadota</taxon>
        <taxon>Alphaproteobacteria</taxon>
        <taxon>Rhodobacterales</taxon>
        <taxon>Roseobacteraceae</taxon>
        <taxon>Roseobacter</taxon>
    </lineage>
</organism>
<accession>Q166E0</accession>
<name>DNLJ_ROSDO</name>
<comment type="function">
    <text evidence="1">DNA ligase that catalyzes the formation of phosphodiester linkages between 5'-phosphoryl and 3'-hydroxyl groups in double-stranded DNA using NAD as a coenzyme and as the energy source for the reaction. It is essential for DNA replication and repair of damaged DNA.</text>
</comment>
<comment type="catalytic activity">
    <reaction evidence="1">
        <text>NAD(+) + (deoxyribonucleotide)n-3'-hydroxyl + 5'-phospho-(deoxyribonucleotide)m = (deoxyribonucleotide)n+m + AMP + beta-nicotinamide D-nucleotide.</text>
        <dbReference type="EC" id="6.5.1.2"/>
    </reaction>
</comment>
<comment type="cofactor">
    <cofactor evidence="1">
        <name>Mg(2+)</name>
        <dbReference type="ChEBI" id="CHEBI:18420"/>
    </cofactor>
    <cofactor evidence="1">
        <name>Mn(2+)</name>
        <dbReference type="ChEBI" id="CHEBI:29035"/>
    </cofactor>
</comment>
<comment type="similarity">
    <text evidence="1">Belongs to the NAD-dependent DNA ligase family. LigA subfamily.</text>
</comment>
<sequence>MDFAPLDSLTEKAAKKELSKLADLLDQANTAYHANDAPIISDADFDAYKRRNLAIEERFPHLKRADSPTDRVGAAPSAGFSKVVHSIAMLSLANAFDEADVSDFVQRIRKHLGLSDIEALSFTSEPKIDGLSLSLRYENGTLVQAATRGDGAIGENVTENARTIPDIPEQISNAPDVLEVRGEVYMSHADFEALNARQASAGAKLFANPRNAAAGSLRQLDARITQSRPLRFFAYAWGTLSEPLGKTQMQSIERLQSFGFQTNDLTEKCNGPEELLAQYRRIEERRASLDYDIDGVVYKVDDLDLQRRLGFRSTTPRWAIAHKFPAELAWTELQGIDIQVGRTGALSPVARLKPVTVGGVVVSNATLHNEDYIAGRDNKGDVIRGGKDIRVGDFVQVYRAGDVIPKVADVDLKKRPADAIPYVFPATCPECGSDALREAGDAVRRCTGGLICPAQAVERLKHFVSRAAFDIDGLGAKQIEQFYKDGWISEPADIFTLRDRFGSGIQQLKNRDGWGEKSANNLFDAIDDKRQIPLARLIFALGIRHVGEAASNLIAQHYSTFDAFEKSMLAAQDKDGEAWDDLLSIDGVGTVMAQSVIHAMGQAAERASIDRLVAQLDVQPSEAVVTDGSPVAGKTVVFTGTLSKMTRAEAKSRAESLGARVAGSVSAKTDFLVAGPGAGSKAKKAAELGVQTLDEDGWLALIEGL</sequence>
<gene>
    <name evidence="1" type="primary">ligA</name>
    <name type="ordered locus">RD1_2602</name>
</gene>
<protein>
    <recommendedName>
        <fullName evidence="1">DNA ligase</fullName>
        <ecNumber evidence="1">6.5.1.2</ecNumber>
    </recommendedName>
    <alternativeName>
        <fullName evidence="1">Polydeoxyribonucleotide synthase [NAD(+)]</fullName>
    </alternativeName>
</protein>
<dbReference type="EC" id="6.5.1.2" evidence="1"/>
<dbReference type="EMBL" id="CP000362">
    <property type="protein sequence ID" value="ABG32153.1"/>
    <property type="molecule type" value="Genomic_DNA"/>
</dbReference>
<dbReference type="RefSeq" id="WP_011568770.1">
    <property type="nucleotide sequence ID" value="NC_008209.1"/>
</dbReference>
<dbReference type="SMR" id="Q166E0"/>
<dbReference type="STRING" id="375451.RD1_2602"/>
<dbReference type="KEGG" id="rde:RD1_2602"/>
<dbReference type="eggNOG" id="COG0272">
    <property type="taxonomic scope" value="Bacteria"/>
</dbReference>
<dbReference type="HOGENOM" id="CLU_007764_2_0_5"/>
<dbReference type="OrthoDB" id="9759736at2"/>
<dbReference type="Proteomes" id="UP000007029">
    <property type="component" value="Chromosome"/>
</dbReference>
<dbReference type="GO" id="GO:0005829">
    <property type="term" value="C:cytosol"/>
    <property type="evidence" value="ECO:0007669"/>
    <property type="project" value="TreeGrafter"/>
</dbReference>
<dbReference type="GO" id="GO:0003911">
    <property type="term" value="F:DNA ligase (NAD+) activity"/>
    <property type="evidence" value="ECO:0007669"/>
    <property type="project" value="UniProtKB-UniRule"/>
</dbReference>
<dbReference type="GO" id="GO:0046872">
    <property type="term" value="F:metal ion binding"/>
    <property type="evidence" value="ECO:0007669"/>
    <property type="project" value="UniProtKB-KW"/>
</dbReference>
<dbReference type="GO" id="GO:0006281">
    <property type="term" value="P:DNA repair"/>
    <property type="evidence" value="ECO:0007669"/>
    <property type="project" value="UniProtKB-KW"/>
</dbReference>
<dbReference type="GO" id="GO:0006260">
    <property type="term" value="P:DNA replication"/>
    <property type="evidence" value="ECO:0007669"/>
    <property type="project" value="UniProtKB-KW"/>
</dbReference>
<dbReference type="CDD" id="cd17748">
    <property type="entry name" value="BRCT_DNA_ligase_like"/>
    <property type="match status" value="1"/>
</dbReference>
<dbReference type="CDD" id="cd00114">
    <property type="entry name" value="LIGANc"/>
    <property type="match status" value="1"/>
</dbReference>
<dbReference type="FunFam" id="1.10.150.20:FF:000007">
    <property type="entry name" value="DNA ligase"/>
    <property type="match status" value="1"/>
</dbReference>
<dbReference type="FunFam" id="3.30.470.30:FF:000001">
    <property type="entry name" value="DNA ligase"/>
    <property type="match status" value="1"/>
</dbReference>
<dbReference type="Gene3D" id="6.20.10.30">
    <property type="match status" value="1"/>
</dbReference>
<dbReference type="Gene3D" id="1.10.150.20">
    <property type="entry name" value="5' to 3' exonuclease, C-terminal subdomain"/>
    <property type="match status" value="2"/>
</dbReference>
<dbReference type="Gene3D" id="3.40.50.10190">
    <property type="entry name" value="BRCT domain"/>
    <property type="match status" value="1"/>
</dbReference>
<dbReference type="Gene3D" id="3.30.470.30">
    <property type="entry name" value="DNA ligase/mRNA capping enzyme"/>
    <property type="match status" value="1"/>
</dbReference>
<dbReference type="Gene3D" id="1.10.287.610">
    <property type="entry name" value="Helix hairpin bin"/>
    <property type="match status" value="1"/>
</dbReference>
<dbReference type="Gene3D" id="2.40.50.140">
    <property type="entry name" value="Nucleic acid-binding proteins"/>
    <property type="match status" value="1"/>
</dbReference>
<dbReference type="HAMAP" id="MF_01588">
    <property type="entry name" value="DNA_ligase_A"/>
    <property type="match status" value="1"/>
</dbReference>
<dbReference type="InterPro" id="IPR001357">
    <property type="entry name" value="BRCT_dom"/>
</dbReference>
<dbReference type="InterPro" id="IPR036420">
    <property type="entry name" value="BRCT_dom_sf"/>
</dbReference>
<dbReference type="InterPro" id="IPR041663">
    <property type="entry name" value="DisA/LigA_HHH"/>
</dbReference>
<dbReference type="InterPro" id="IPR001679">
    <property type="entry name" value="DNA_ligase"/>
</dbReference>
<dbReference type="InterPro" id="IPR018239">
    <property type="entry name" value="DNA_ligase_AS"/>
</dbReference>
<dbReference type="InterPro" id="IPR033136">
    <property type="entry name" value="DNA_ligase_CS"/>
</dbReference>
<dbReference type="InterPro" id="IPR013839">
    <property type="entry name" value="DNAligase_adenylation"/>
</dbReference>
<dbReference type="InterPro" id="IPR013840">
    <property type="entry name" value="DNAligase_N"/>
</dbReference>
<dbReference type="InterPro" id="IPR012340">
    <property type="entry name" value="NA-bd_OB-fold"/>
</dbReference>
<dbReference type="InterPro" id="IPR004150">
    <property type="entry name" value="NAD_DNA_ligase_OB"/>
</dbReference>
<dbReference type="InterPro" id="IPR010994">
    <property type="entry name" value="RuvA_2-like"/>
</dbReference>
<dbReference type="InterPro" id="IPR004149">
    <property type="entry name" value="Znf_DNAligase_C4"/>
</dbReference>
<dbReference type="NCBIfam" id="TIGR00575">
    <property type="entry name" value="dnlj"/>
    <property type="match status" value="1"/>
</dbReference>
<dbReference type="NCBIfam" id="NF005932">
    <property type="entry name" value="PRK07956.1"/>
    <property type="match status" value="1"/>
</dbReference>
<dbReference type="PANTHER" id="PTHR23389">
    <property type="entry name" value="CHROMOSOME TRANSMISSION FIDELITY FACTOR 18"/>
    <property type="match status" value="1"/>
</dbReference>
<dbReference type="PANTHER" id="PTHR23389:SF9">
    <property type="entry name" value="DNA LIGASE"/>
    <property type="match status" value="1"/>
</dbReference>
<dbReference type="Pfam" id="PF00533">
    <property type="entry name" value="BRCT"/>
    <property type="match status" value="1"/>
</dbReference>
<dbReference type="Pfam" id="PF01653">
    <property type="entry name" value="DNA_ligase_aden"/>
    <property type="match status" value="1"/>
</dbReference>
<dbReference type="Pfam" id="PF03120">
    <property type="entry name" value="DNA_ligase_OB"/>
    <property type="match status" value="1"/>
</dbReference>
<dbReference type="Pfam" id="PF03119">
    <property type="entry name" value="DNA_ligase_ZBD"/>
    <property type="match status" value="1"/>
</dbReference>
<dbReference type="Pfam" id="PF12826">
    <property type="entry name" value="HHH_2"/>
    <property type="match status" value="1"/>
</dbReference>
<dbReference type="PIRSF" id="PIRSF001604">
    <property type="entry name" value="LigA"/>
    <property type="match status" value="1"/>
</dbReference>
<dbReference type="SMART" id="SM00292">
    <property type="entry name" value="BRCT"/>
    <property type="match status" value="1"/>
</dbReference>
<dbReference type="SMART" id="SM00532">
    <property type="entry name" value="LIGANc"/>
    <property type="match status" value="1"/>
</dbReference>
<dbReference type="SUPFAM" id="SSF52113">
    <property type="entry name" value="BRCT domain"/>
    <property type="match status" value="1"/>
</dbReference>
<dbReference type="SUPFAM" id="SSF56091">
    <property type="entry name" value="DNA ligase/mRNA capping enzyme, catalytic domain"/>
    <property type="match status" value="1"/>
</dbReference>
<dbReference type="SUPFAM" id="SSF50249">
    <property type="entry name" value="Nucleic acid-binding proteins"/>
    <property type="match status" value="1"/>
</dbReference>
<dbReference type="SUPFAM" id="SSF47781">
    <property type="entry name" value="RuvA domain 2-like"/>
    <property type="match status" value="1"/>
</dbReference>
<dbReference type="PROSITE" id="PS50172">
    <property type="entry name" value="BRCT"/>
    <property type="match status" value="1"/>
</dbReference>
<dbReference type="PROSITE" id="PS01055">
    <property type="entry name" value="DNA_LIGASE_N1"/>
    <property type="match status" value="1"/>
</dbReference>
<dbReference type="PROSITE" id="PS01056">
    <property type="entry name" value="DNA_LIGASE_N2"/>
    <property type="match status" value="1"/>
</dbReference>
<reference key="1">
    <citation type="journal article" date="2007" name="J. Bacteriol.">
        <title>The complete genome sequence of Roseobacter denitrificans reveals a mixotrophic rather than photosynthetic metabolism.</title>
        <authorList>
            <person name="Swingley W.D."/>
            <person name="Sadekar S."/>
            <person name="Mastrian S.D."/>
            <person name="Matthies H.J."/>
            <person name="Hao J."/>
            <person name="Ramos H."/>
            <person name="Acharya C.R."/>
            <person name="Conrad A.L."/>
            <person name="Taylor H.L."/>
            <person name="Dejesa L.C."/>
            <person name="Shah M.K."/>
            <person name="O'Huallachain M.E."/>
            <person name="Lince M.T."/>
            <person name="Blankenship R.E."/>
            <person name="Beatty J.T."/>
            <person name="Touchman J.W."/>
        </authorList>
    </citation>
    <scope>NUCLEOTIDE SEQUENCE [LARGE SCALE GENOMIC DNA]</scope>
    <source>
        <strain>ATCC 33942 / OCh 114</strain>
    </source>
</reference>
<evidence type="ECO:0000255" key="1">
    <source>
        <dbReference type="HAMAP-Rule" id="MF_01588"/>
    </source>
</evidence>
<proteinExistence type="inferred from homology"/>
<feature type="chain" id="PRO_0000313412" description="DNA ligase">
    <location>
        <begin position="1"/>
        <end position="705"/>
    </location>
</feature>
<feature type="domain" description="BRCT" evidence="1">
    <location>
        <begin position="626"/>
        <end position="705"/>
    </location>
</feature>
<feature type="active site" description="N6-AMP-lysine intermediate" evidence="1">
    <location>
        <position position="127"/>
    </location>
</feature>
<feature type="binding site" evidence="1">
    <location>
        <begin position="42"/>
        <end position="46"/>
    </location>
    <ligand>
        <name>NAD(+)</name>
        <dbReference type="ChEBI" id="CHEBI:57540"/>
    </ligand>
</feature>
<feature type="binding site" evidence="1">
    <location>
        <begin position="91"/>
        <end position="92"/>
    </location>
    <ligand>
        <name>NAD(+)</name>
        <dbReference type="ChEBI" id="CHEBI:57540"/>
    </ligand>
</feature>
<feature type="binding site" evidence="1">
    <location>
        <position position="125"/>
    </location>
    <ligand>
        <name>NAD(+)</name>
        <dbReference type="ChEBI" id="CHEBI:57540"/>
    </ligand>
</feature>
<feature type="binding site" evidence="1">
    <location>
        <position position="148"/>
    </location>
    <ligand>
        <name>NAD(+)</name>
        <dbReference type="ChEBI" id="CHEBI:57540"/>
    </ligand>
</feature>
<feature type="binding site" evidence="1">
    <location>
        <position position="183"/>
    </location>
    <ligand>
        <name>NAD(+)</name>
        <dbReference type="ChEBI" id="CHEBI:57540"/>
    </ligand>
</feature>
<feature type="binding site" evidence="1">
    <location>
        <position position="299"/>
    </location>
    <ligand>
        <name>NAD(+)</name>
        <dbReference type="ChEBI" id="CHEBI:57540"/>
    </ligand>
</feature>
<feature type="binding site" evidence="1">
    <location>
        <position position="323"/>
    </location>
    <ligand>
        <name>NAD(+)</name>
        <dbReference type="ChEBI" id="CHEBI:57540"/>
    </ligand>
</feature>
<feature type="binding site" evidence="1">
    <location>
        <position position="428"/>
    </location>
    <ligand>
        <name>Zn(2+)</name>
        <dbReference type="ChEBI" id="CHEBI:29105"/>
    </ligand>
</feature>
<feature type="binding site" evidence="1">
    <location>
        <position position="431"/>
    </location>
    <ligand>
        <name>Zn(2+)</name>
        <dbReference type="ChEBI" id="CHEBI:29105"/>
    </ligand>
</feature>
<feature type="binding site" evidence="1">
    <location>
        <position position="446"/>
    </location>
    <ligand>
        <name>Zn(2+)</name>
        <dbReference type="ChEBI" id="CHEBI:29105"/>
    </ligand>
</feature>
<feature type="binding site" evidence="1">
    <location>
        <position position="452"/>
    </location>
    <ligand>
        <name>Zn(2+)</name>
        <dbReference type="ChEBI" id="CHEBI:29105"/>
    </ligand>
</feature>
<keyword id="KW-0227">DNA damage</keyword>
<keyword id="KW-0234">DNA repair</keyword>
<keyword id="KW-0235">DNA replication</keyword>
<keyword id="KW-0436">Ligase</keyword>
<keyword id="KW-0460">Magnesium</keyword>
<keyword id="KW-0464">Manganese</keyword>
<keyword id="KW-0479">Metal-binding</keyword>
<keyword id="KW-0520">NAD</keyword>
<keyword id="KW-1185">Reference proteome</keyword>
<keyword id="KW-0862">Zinc</keyword>